<feature type="chain" id="PRO_1000215366" description="UPF0325 protein PC1_0937">
    <location>
        <begin position="1"/>
        <end position="129"/>
    </location>
</feature>
<name>Y937_PECCP</name>
<organism>
    <name type="scientific">Pectobacterium carotovorum subsp. carotovorum (strain PC1)</name>
    <dbReference type="NCBI Taxonomy" id="561230"/>
    <lineage>
        <taxon>Bacteria</taxon>
        <taxon>Pseudomonadati</taxon>
        <taxon>Pseudomonadota</taxon>
        <taxon>Gammaproteobacteria</taxon>
        <taxon>Enterobacterales</taxon>
        <taxon>Pectobacteriaceae</taxon>
        <taxon>Pectobacterium</taxon>
    </lineage>
</organism>
<sequence>MYDNLKSLGITNPDDIDRYSLRQEANNDILKIYFRKDKGEFFAKSVKFKYPRQRKTIVADNSGQGYKEINEISPNLRYVIDELDKICQQEQVEVDLKRKILDDLRHLESVVSNKITEIEADLEKLTKNR</sequence>
<gene>
    <name type="ordered locus">PC1_0937</name>
</gene>
<accession>C6DAH9</accession>
<evidence type="ECO:0000255" key="1">
    <source>
        <dbReference type="HAMAP-Rule" id="MF_01519"/>
    </source>
</evidence>
<dbReference type="EMBL" id="CP001657">
    <property type="protein sequence ID" value="ACT11987.1"/>
    <property type="molecule type" value="Genomic_DNA"/>
</dbReference>
<dbReference type="RefSeq" id="WP_010284811.1">
    <property type="nucleotide sequence ID" value="NC_012917.1"/>
</dbReference>
<dbReference type="SMR" id="C6DAH9"/>
<dbReference type="STRING" id="561230.PC1_0937"/>
<dbReference type="KEGG" id="pct:PC1_0937"/>
<dbReference type="eggNOG" id="ENOG502ZBV4">
    <property type="taxonomic scope" value="Bacteria"/>
</dbReference>
<dbReference type="HOGENOM" id="CLU_136774_0_0_6"/>
<dbReference type="OrthoDB" id="5624524at2"/>
<dbReference type="Proteomes" id="UP000002736">
    <property type="component" value="Chromosome"/>
</dbReference>
<dbReference type="HAMAP" id="MF_01519">
    <property type="entry name" value="UPF0325"/>
    <property type="match status" value="1"/>
</dbReference>
<dbReference type="InterPro" id="IPR020911">
    <property type="entry name" value="UPF0325"/>
</dbReference>
<dbReference type="NCBIfam" id="NF010213">
    <property type="entry name" value="PRK13677.1"/>
    <property type="match status" value="1"/>
</dbReference>
<dbReference type="Pfam" id="PF11944">
    <property type="entry name" value="DUF3461"/>
    <property type="match status" value="1"/>
</dbReference>
<proteinExistence type="inferred from homology"/>
<comment type="similarity">
    <text evidence="1">Belongs to the UPF0325 family.</text>
</comment>
<reference key="1">
    <citation type="submission" date="2009-07" db="EMBL/GenBank/DDBJ databases">
        <title>Complete sequence of Pectobacterium carotovorum subsp. carotovorum PC1.</title>
        <authorList>
            <consortium name="US DOE Joint Genome Institute"/>
            <person name="Lucas S."/>
            <person name="Copeland A."/>
            <person name="Lapidus A."/>
            <person name="Glavina del Rio T."/>
            <person name="Tice H."/>
            <person name="Bruce D."/>
            <person name="Goodwin L."/>
            <person name="Pitluck S."/>
            <person name="Munk A.C."/>
            <person name="Brettin T."/>
            <person name="Detter J.C."/>
            <person name="Han C."/>
            <person name="Tapia R."/>
            <person name="Larimer F."/>
            <person name="Land M."/>
            <person name="Hauser L."/>
            <person name="Kyrpides N."/>
            <person name="Mikhailova N."/>
            <person name="Balakrishnan V."/>
            <person name="Glasner J."/>
            <person name="Perna N.T."/>
        </authorList>
    </citation>
    <scope>NUCLEOTIDE SEQUENCE [LARGE SCALE GENOMIC DNA]</scope>
    <source>
        <strain>PC1</strain>
    </source>
</reference>
<protein>
    <recommendedName>
        <fullName evidence="1">UPF0325 protein PC1_0937</fullName>
    </recommendedName>
</protein>